<comment type="function">
    <text evidence="1">Catalyzes the condensation reaction of fatty acid synthesis by the addition to an acyl acceptor of two carbons from malonyl-ACP. Catalyzes the first condensation reaction which initiates fatty acid synthesis and may therefore play a role in governing the total rate of fatty acid production. Possesses both acetoacetyl-ACP synthase and acetyl transacylase activities. Its substrate specificity determines the biosynthesis of branched-chain and/or straight-chain of fatty acids.</text>
</comment>
<comment type="catalytic activity">
    <reaction evidence="1">
        <text>malonyl-[ACP] + acetyl-CoA + H(+) = 3-oxobutanoyl-[ACP] + CO2 + CoA</text>
        <dbReference type="Rhea" id="RHEA:12080"/>
        <dbReference type="Rhea" id="RHEA-COMP:9623"/>
        <dbReference type="Rhea" id="RHEA-COMP:9625"/>
        <dbReference type="ChEBI" id="CHEBI:15378"/>
        <dbReference type="ChEBI" id="CHEBI:16526"/>
        <dbReference type="ChEBI" id="CHEBI:57287"/>
        <dbReference type="ChEBI" id="CHEBI:57288"/>
        <dbReference type="ChEBI" id="CHEBI:78449"/>
        <dbReference type="ChEBI" id="CHEBI:78450"/>
        <dbReference type="EC" id="2.3.1.180"/>
    </reaction>
</comment>
<comment type="pathway">
    <text evidence="1">Lipid metabolism; fatty acid biosynthesis.</text>
</comment>
<comment type="subunit">
    <text evidence="1">Homodimer.</text>
</comment>
<comment type="subcellular location">
    <subcellularLocation>
        <location evidence="1">Cytoplasm</location>
    </subcellularLocation>
</comment>
<comment type="domain">
    <text evidence="1">The last Arg residue of the ACP-binding site is essential for the weak association between ACP/AcpP and FabH.</text>
</comment>
<comment type="similarity">
    <text evidence="1">Belongs to the thiolase-like superfamily. FabH family.</text>
</comment>
<proteinExistence type="inferred from homology"/>
<keyword id="KW-0012">Acyltransferase</keyword>
<keyword id="KW-0963">Cytoplasm</keyword>
<keyword id="KW-0275">Fatty acid biosynthesis</keyword>
<keyword id="KW-0276">Fatty acid metabolism</keyword>
<keyword id="KW-0444">Lipid biosynthesis</keyword>
<keyword id="KW-0443">Lipid metabolism</keyword>
<keyword id="KW-0511">Multifunctional enzyme</keyword>
<keyword id="KW-0808">Transferase</keyword>
<reference key="1">
    <citation type="journal article" date="2005" name="J. Bacteriol.">
        <title>Whole-genome sequencing of Staphylococcus haemolyticus uncovers the extreme plasticity of its genome and the evolution of human-colonizing staphylococcal species.</title>
        <authorList>
            <person name="Takeuchi F."/>
            <person name="Watanabe S."/>
            <person name="Baba T."/>
            <person name="Yuzawa H."/>
            <person name="Ito T."/>
            <person name="Morimoto Y."/>
            <person name="Kuroda M."/>
            <person name="Cui L."/>
            <person name="Takahashi M."/>
            <person name="Ankai A."/>
            <person name="Baba S."/>
            <person name="Fukui S."/>
            <person name="Lee J.C."/>
            <person name="Hiramatsu K."/>
        </authorList>
    </citation>
    <scope>NUCLEOTIDE SEQUENCE [LARGE SCALE GENOMIC DNA]</scope>
    <source>
        <strain>JCSC1435</strain>
    </source>
</reference>
<feature type="chain" id="PRO_0000110477" description="Beta-ketoacyl-[acyl-carrier-protein] synthase III">
    <location>
        <begin position="1"/>
        <end position="313"/>
    </location>
</feature>
<feature type="region of interest" description="ACP-binding" evidence="1">
    <location>
        <begin position="239"/>
        <end position="243"/>
    </location>
</feature>
<feature type="active site" evidence="1">
    <location>
        <position position="112"/>
    </location>
</feature>
<feature type="active site" evidence="1">
    <location>
        <position position="238"/>
    </location>
</feature>
<feature type="active site" evidence="1">
    <location>
        <position position="268"/>
    </location>
</feature>
<gene>
    <name evidence="1" type="primary">fabH</name>
    <name type="ordered locus">SH1973</name>
</gene>
<organism>
    <name type="scientific">Staphylococcus haemolyticus (strain JCSC1435)</name>
    <dbReference type="NCBI Taxonomy" id="279808"/>
    <lineage>
        <taxon>Bacteria</taxon>
        <taxon>Bacillati</taxon>
        <taxon>Bacillota</taxon>
        <taxon>Bacilli</taxon>
        <taxon>Bacillales</taxon>
        <taxon>Staphylococcaceae</taxon>
        <taxon>Staphylococcus</taxon>
    </lineage>
</organism>
<accession>Q4L4Z3</accession>
<evidence type="ECO:0000255" key="1">
    <source>
        <dbReference type="HAMAP-Rule" id="MF_01815"/>
    </source>
</evidence>
<sequence>MNVGIKGFGAYAPEKVVDNAYFESFLETSDEWISKMTGIKERRWASENQDTSDLAFEASKKAIKDAGITPADIDMIIVATATGDMPFPSVANILQEKLDTRKVPTMDQLAACSGFMYSMITAKQYVQSGDYKNILVVGADKLSKITDLTDRSTAVLFGDGAGAVVIGEVSEGRGIISYEMGSDGNGGKYLYLNKDTGKLVMNGREVFKFAVRIMGEASTRVVDKAGLQSDDIDMFIPHQANIRIMESARERLGIEREKMSVSVNRFGNTSAASIPLSISQELENGRIKDDDTLVLVGFGGGLTWGAMVIKWGK</sequence>
<protein>
    <recommendedName>
        <fullName evidence="1">Beta-ketoacyl-[acyl-carrier-protein] synthase III</fullName>
        <shortName evidence="1">Beta-ketoacyl-ACP synthase III</shortName>
        <shortName evidence="1">KAS III</shortName>
        <ecNumber evidence="1">2.3.1.180</ecNumber>
    </recommendedName>
    <alternativeName>
        <fullName evidence="1">3-oxoacyl-[acyl-carrier-protein] synthase 3</fullName>
    </alternativeName>
    <alternativeName>
        <fullName evidence="1">3-oxoacyl-[acyl-carrier-protein] synthase III</fullName>
    </alternativeName>
</protein>
<dbReference type="EC" id="2.3.1.180" evidence="1"/>
<dbReference type="EMBL" id="AP006716">
    <property type="protein sequence ID" value="BAE05282.1"/>
    <property type="molecule type" value="Genomic_DNA"/>
</dbReference>
<dbReference type="RefSeq" id="WP_011276240.1">
    <property type="nucleotide sequence ID" value="NC_007168.1"/>
</dbReference>
<dbReference type="SMR" id="Q4L4Z3"/>
<dbReference type="KEGG" id="sha:SH1973"/>
<dbReference type="eggNOG" id="COG0332">
    <property type="taxonomic scope" value="Bacteria"/>
</dbReference>
<dbReference type="HOGENOM" id="CLU_039592_3_1_9"/>
<dbReference type="OrthoDB" id="9815506at2"/>
<dbReference type="UniPathway" id="UPA00094"/>
<dbReference type="Proteomes" id="UP000000543">
    <property type="component" value="Chromosome"/>
</dbReference>
<dbReference type="GO" id="GO:0005737">
    <property type="term" value="C:cytoplasm"/>
    <property type="evidence" value="ECO:0007669"/>
    <property type="project" value="UniProtKB-SubCell"/>
</dbReference>
<dbReference type="GO" id="GO:0004315">
    <property type="term" value="F:3-oxoacyl-[acyl-carrier-protein] synthase activity"/>
    <property type="evidence" value="ECO:0007669"/>
    <property type="project" value="InterPro"/>
</dbReference>
<dbReference type="GO" id="GO:0033818">
    <property type="term" value="F:beta-ketoacyl-acyl-carrier-protein synthase III activity"/>
    <property type="evidence" value="ECO:0007669"/>
    <property type="project" value="UniProtKB-UniRule"/>
</dbReference>
<dbReference type="GO" id="GO:0006633">
    <property type="term" value="P:fatty acid biosynthetic process"/>
    <property type="evidence" value="ECO:0007669"/>
    <property type="project" value="UniProtKB-UniRule"/>
</dbReference>
<dbReference type="CDD" id="cd00830">
    <property type="entry name" value="KAS_III"/>
    <property type="match status" value="1"/>
</dbReference>
<dbReference type="FunFam" id="3.40.47.10:FF:000004">
    <property type="entry name" value="3-oxoacyl-[acyl-carrier-protein] synthase 3"/>
    <property type="match status" value="1"/>
</dbReference>
<dbReference type="Gene3D" id="3.40.47.10">
    <property type="match status" value="1"/>
</dbReference>
<dbReference type="HAMAP" id="MF_01815">
    <property type="entry name" value="FabH"/>
    <property type="match status" value="1"/>
</dbReference>
<dbReference type="InterPro" id="IPR013747">
    <property type="entry name" value="ACP_syn_III_C"/>
</dbReference>
<dbReference type="InterPro" id="IPR013751">
    <property type="entry name" value="ACP_syn_III_N"/>
</dbReference>
<dbReference type="InterPro" id="IPR004655">
    <property type="entry name" value="FabH"/>
</dbReference>
<dbReference type="InterPro" id="IPR016039">
    <property type="entry name" value="Thiolase-like"/>
</dbReference>
<dbReference type="NCBIfam" id="TIGR00747">
    <property type="entry name" value="fabH"/>
    <property type="match status" value="1"/>
</dbReference>
<dbReference type="NCBIfam" id="NF006829">
    <property type="entry name" value="PRK09352.1"/>
    <property type="match status" value="1"/>
</dbReference>
<dbReference type="PANTHER" id="PTHR43091">
    <property type="entry name" value="3-OXOACYL-[ACYL-CARRIER-PROTEIN] SYNTHASE"/>
    <property type="match status" value="1"/>
</dbReference>
<dbReference type="PANTHER" id="PTHR43091:SF1">
    <property type="entry name" value="BETA-KETOACYL-[ACYL-CARRIER-PROTEIN] SYNTHASE III, CHLOROPLASTIC"/>
    <property type="match status" value="1"/>
</dbReference>
<dbReference type="Pfam" id="PF08545">
    <property type="entry name" value="ACP_syn_III"/>
    <property type="match status" value="1"/>
</dbReference>
<dbReference type="Pfam" id="PF08541">
    <property type="entry name" value="ACP_syn_III_C"/>
    <property type="match status" value="1"/>
</dbReference>
<dbReference type="SUPFAM" id="SSF53901">
    <property type="entry name" value="Thiolase-like"/>
    <property type="match status" value="1"/>
</dbReference>
<name>FABH_STAHJ</name>